<keyword id="KW-0002">3D-structure</keyword>
<keyword id="KW-0004">4Fe-4S</keyword>
<keyword id="KW-0025">Alternative splicing</keyword>
<keyword id="KW-0227">DNA damage</keyword>
<keyword id="KW-0234">DNA repair</keyword>
<keyword id="KW-0235">DNA replication</keyword>
<keyword id="KW-0238">DNA-binding</keyword>
<keyword id="KW-0239">DNA-directed DNA polymerase</keyword>
<keyword id="KW-0408">Iron</keyword>
<keyword id="KW-0411">Iron-sulfur</keyword>
<keyword id="KW-0479">Metal-binding</keyword>
<keyword id="KW-0548">Nucleotidyltransferase</keyword>
<keyword id="KW-0539">Nucleus</keyword>
<keyword id="KW-0597">Phosphoprotein</keyword>
<keyword id="KW-1267">Proteomics identification</keyword>
<keyword id="KW-1185">Reference proteome</keyword>
<keyword id="KW-0808">Transferase</keyword>
<keyword id="KW-0862">Zinc</keyword>
<keyword id="KW-0863">Zinc-finger</keyword>
<proteinExistence type="evidence at protein level"/>
<organism>
    <name type="scientific">Homo sapiens</name>
    <name type="common">Human</name>
    <dbReference type="NCBI Taxonomy" id="9606"/>
    <lineage>
        <taxon>Eukaryota</taxon>
        <taxon>Metazoa</taxon>
        <taxon>Chordata</taxon>
        <taxon>Craniata</taxon>
        <taxon>Vertebrata</taxon>
        <taxon>Euteleostomi</taxon>
        <taxon>Mammalia</taxon>
        <taxon>Eutheria</taxon>
        <taxon>Euarchontoglires</taxon>
        <taxon>Primates</taxon>
        <taxon>Haplorrhini</taxon>
        <taxon>Catarrhini</taxon>
        <taxon>Hominidae</taxon>
        <taxon>Homo</taxon>
    </lineage>
</organism>
<protein>
    <recommendedName>
        <fullName>DNA polymerase zeta catalytic subunit</fullName>
        <ecNumber>2.7.7.7</ecNumber>
    </recommendedName>
    <alternativeName>
        <fullName>Protein reversionless 3-like</fullName>
        <shortName>REV3-like</shortName>
        <shortName>hREV3</shortName>
    </alternativeName>
</protein>
<dbReference type="EC" id="2.7.7.7"/>
<dbReference type="EMBL" id="AF058701">
    <property type="protein sequence ID" value="AAC24357.1"/>
    <property type="molecule type" value="mRNA"/>
</dbReference>
<dbReference type="EMBL" id="AF071798">
    <property type="protein sequence ID" value="AAC24009.1"/>
    <property type="molecule type" value="mRNA"/>
</dbReference>
<dbReference type="EMBL" id="AF157476">
    <property type="protein sequence ID" value="AAD40184.1"/>
    <property type="molecule type" value="mRNA"/>
</dbReference>
<dbReference type="EMBL" id="AF179428">
    <property type="protein sequence ID" value="AAG09402.1"/>
    <property type="molecule type" value="mRNA"/>
</dbReference>
<dbReference type="EMBL" id="AF179429">
    <property type="protein sequence ID" value="AAG09403.1"/>
    <property type="molecule type" value="mRNA"/>
</dbReference>
<dbReference type="EMBL" id="AF078695">
    <property type="protein sequence ID" value="AAC28460.1"/>
    <property type="molecule type" value="mRNA"/>
</dbReference>
<dbReference type="EMBL" id="AY684169">
    <property type="protein sequence ID" value="AAT74627.1"/>
    <property type="molecule type" value="Genomic_DNA"/>
</dbReference>
<dbReference type="EMBL" id="AL080317">
    <property type="status" value="NOT_ANNOTATED_CDS"/>
    <property type="molecule type" value="Genomic_DNA"/>
</dbReference>
<dbReference type="EMBL" id="AL136310">
    <property type="status" value="NOT_ANNOTATED_CDS"/>
    <property type="molecule type" value="Genomic_DNA"/>
</dbReference>
<dbReference type="EMBL" id="AL512325">
    <property type="status" value="NOT_ANNOTATED_CDS"/>
    <property type="molecule type" value="Genomic_DNA"/>
</dbReference>
<dbReference type="EMBL" id="AF035537">
    <property type="protein sequence ID" value="AAB88486.1"/>
    <property type="molecule type" value="mRNA"/>
</dbReference>
<dbReference type="CCDS" id="CCDS5091.2">
    <molecule id="O60673-1"/>
</dbReference>
<dbReference type="CCDS" id="CCDS69177.1">
    <molecule id="O60673-2"/>
</dbReference>
<dbReference type="RefSeq" id="NP_001273360.1">
    <molecule id="O60673-2"/>
    <property type="nucleotide sequence ID" value="NM_001286431.2"/>
</dbReference>
<dbReference type="RefSeq" id="NP_001273361.1">
    <molecule id="O60673-2"/>
    <property type="nucleotide sequence ID" value="NM_001286432.2"/>
</dbReference>
<dbReference type="RefSeq" id="NP_001359007.1">
    <molecule id="O60673-1"/>
    <property type="nucleotide sequence ID" value="NM_001372078.1"/>
</dbReference>
<dbReference type="RefSeq" id="NP_002903.3">
    <molecule id="O60673-1"/>
    <property type="nucleotide sequence ID" value="NM_002912.5"/>
</dbReference>
<dbReference type="PDB" id="3ABD">
    <property type="method" value="X-ray"/>
    <property type="resolution" value="1.90 A"/>
    <property type="chains" value="X/Y=1847-1898"/>
</dbReference>
<dbReference type="PDB" id="3ABE">
    <property type="method" value="X-ray"/>
    <property type="resolution" value="2.60 A"/>
    <property type="chains" value="Z=1847-1898"/>
</dbReference>
<dbReference type="PDB" id="3VU7">
    <property type="method" value="X-ray"/>
    <property type="resolution" value="2.80 A"/>
    <property type="chains" value="Z=1847-1898"/>
</dbReference>
<dbReference type="PDB" id="4EXT">
    <property type="method" value="X-ray"/>
    <property type="resolution" value="1.90 A"/>
    <property type="chains" value="B=1873-1895"/>
</dbReference>
<dbReference type="PDB" id="4GK0">
    <property type="method" value="X-ray"/>
    <property type="resolution" value="2.70 A"/>
    <property type="chains" value="C/D=1847-1898"/>
</dbReference>
<dbReference type="PDB" id="4GK5">
    <property type="method" value="X-ray"/>
    <property type="resolution" value="3.21 A"/>
    <property type="chains" value="C/D=1847-1898"/>
</dbReference>
<dbReference type="PDB" id="5O8K">
    <property type="method" value="X-ray"/>
    <property type="resolution" value="1.80 A"/>
    <property type="chains" value="B=1873-1898"/>
</dbReference>
<dbReference type="PDB" id="6BC8">
    <property type="method" value="X-ray"/>
    <property type="resolution" value="1.68 A"/>
    <property type="chains" value="B=1987-2014"/>
</dbReference>
<dbReference type="PDB" id="6BCD">
    <property type="method" value="X-ray"/>
    <property type="resolution" value="1.43 A"/>
    <property type="chains" value="B=1987-2014"/>
</dbReference>
<dbReference type="PDB" id="6BI7">
    <property type="method" value="X-ray"/>
    <property type="resolution" value="2.80 A"/>
    <property type="chains" value="B/D/F/H=1987-2014"/>
</dbReference>
<dbReference type="PDB" id="6EKM">
    <property type="method" value="X-ray"/>
    <property type="resolution" value="2.76 A"/>
    <property type="chains" value="B=1989-2014"/>
</dbReference>
<dbReference type="PDB" id="6KEA">
    <property type="method" value="X-ray"/>
    <property type="resolution" value="2.35 A"/>
    <property type="chains" value="A/B/C/D=1850-1872, A/B/C/D=1887-1894"/>
</dbReference>
<dbReference type="PDB" id="6WS0">
    <property type="method" value="X-ray"/>
    <property type="resolution" value="2.24 A"/>
    <property type="chains" value="ZZZ=1847-1898"/>
</dbReference>
<dbReference type="PDB" id="6WS5">
    <property type="method" value="X-ray"/>
    <property type="resolution" value="2.47 A"/>
    <property type="chains" value="ZZZ=1847-1898"/>
</dbReference>
<dbReference type="PDBsum" id="3ABD"/>
<dbReference type="PDBsum" id="3ABE"/>
<dbReference type="PDBsum" id="3VU7"/>
<dbReference type="PDBsum" id="4EXT"/>
<dbReference type="PDBsum" id="4GK0"/>
<dbReference type="PDBsum" id="4GK5"/>
<dbReference type="PDBsum" id="5O8K"/>
<dbReference type="PDBsum" id="6BC8"/>
<dbReference type="PDBsum" id="6BCD"/>
<dbReference type="PDBsum" id="6BI7"/>
<dbReference type="PDBsum" id="6EKM"/>
<dbReference type="PDBsum" id="6KEA"/>
<dbReference type="PDBsum" id="6WS0"/>
<dbReference type="PDBsum" id="6WS5"/>
<dbReference type="SASBDB" id="O60673"/>
<dbReference type="SMR" id="O60673"/>
<dbReference type="BioGRID" id="111912">
    <property type="interactions" value="54"/>
</dbReference>
<dbReference type="ComplexPortal" id="CPX-994">
    <property type="entry name" value="DNA polymerase zeta complex"/>
</dbReference>
<dbReference type="CORUM" id="O60673"/>
<dbReference type="FunCoup" id="O60673">
    <property type="interactions" value="2700"/>
</dbReference>
<dbReference type="IntAct" id="O60673">
    <property type="interactions" value="16"/>
</dbReference>
<dbReference type="MINT" id="O60673"/>
<dbReference type="STRING" id="9606.ENSP00000351697"/>
<dbReference type="GlyGen" id="O60673">
    <property type="glycosylation" value="5 sites, 1 O-linked glycan (2 sites)"/>
</dbReference>
<dbReference type="iPTMnet" id="O60673"/>
<dbReference type="PhosphoSitePlus" id="O60673"/>
<dbReference type="BioMuta" id="REV3L"/>
<dbReference type="CPTAC" id="CPTAC-3252"/>
<dbReference type="CPTAC" id="CPTAC-3253"/>
<dbReference type="CPTAC" id="CPTAC-944"/>
<dbReference type="jPOST" id="O60673"/>
<dbReference type="MassIVE" id="O60673"/>
<dbReference type="PaxDb" id="9606-ENSP00000351697"/>
<dbReference type="PeptideAtlas" id="O60673"/>
<dbReference type="ProteomicsDB" id="49517">
    <molecule id="O60673-1"/>
</dbReference>
<dbReference type="ProteomicsDB" id="49518">
    <molecule id="O60673-2"/>
</dbReference>
<dbReference type="Pumba" id="O60673"/>
<dbReference type="Antibodypedia" id="32376">
    <property type="antibodies" value="99 antibodies from 23 providers"/>
</dbReference>
<dbReference type="DNASU" id="5980"/>
<dbReference type="Ensembl" id="ENST00000358835.7">
    <molecule id="O60673-1"/>
    <property type="protein sequence ID" value="ENSP00000351697.3"/>
    <property type="gene ID" value="ENSG00000009413.17"/>
</dbReference>
<dbReference type="Ensembl" id="ENST00000368802.8">
    <molecule id="O60673-1"/>
    <property type="protein sequence ID" value="ENSP00000357792.3"/>
    <property type="gene ID" value="ENSG00000009413.17"/>
</dbReference>
<dbReference type="Ensembl" id="ENST00000435970.5">
    <molecule id="O60673-2"/>
    <property type="protein sequence ID" value="ENSP00000402003.1"/>
    <property type="gene ID" value="ENSG00000009413.17"/>
</dbReference>
<dbReference type="GeneID" id="5980"/>
<dbReference type="KEGG" id="hsa:5980"/>
<dbReference type="MANE-Select" id="ENST00000368802.8">
    <property type="protein sequence ID" value="ENSP00000357792.3"/>
    <property type="RefSeq nucleotide sequence ID" value="NM_001372078.1"/>
    <property type="RefSeq protein sequence ID" value="NP_001359007.1"/>
</dbReference>
<dbReference type="UCSC" id="uc003puy.6">
    <molecule id="O60673-1"/>
    <property type="organism name" value="human"/>
</dbReference>
<dbReference type="AGR" id="HGNC:9968"/>
<dbReference type="CTD" id="5980"/>
<dbReference type="DisGeNET" id="5980"/>
<dbReference type="GeneCards" id="REV3L"/>
<dbReference type="HGNC" id="HGNC:9968">
    <property type="gene designation" value="REV3L"/>
</dbReference>
<dbReference type="HPA" id="ENSG00000009413">
    <property type="expression patterns" value="Tissue enhanced (retina)"/>
</dbReference>
<dbReference type="MalaCards" id="REV3L"/>
<dbReference type="MIM" id="602776">
    <property type="type" value="gene"/>
</dbReference>
<dbReference type="neXtProt" id="NX_O60673"/>
<dbReference type="OpenTargets" id="ENSG00000009413"/>
<dbReference type="Orphanet" id="570">
    <property type="disease" value="Moebius syndrome"/>
</dbReference>
<dbReference type="PharmGKB" id="PA34337"/>
<dbReference type="VEuPathDB" id="HostDB:ENSG00000009413"/>
<dbReference type="eggNOG" id="KOG0968">
    <property type="taxonomic scope" value="Eukaryota"/>
</dbReference>
<dbReference type="GeneTree" id="ENSGT00940000156226"/>
<dbReference type="HOGENOM" id="CLU_000203_1_0_1"/>
<dbReference type="InParanoid" id="O60673"/>
<dbReference type="OMA" id="DPTSWIR"/>
<dbReference type="OrthoDB" id="2414538at2759"/>
<dbReference type="PAN-GO" id="O60673">
    <property type="GO annotations" value="5 GO annotations based on evolutionary models"/>
</dbReference>
<dbReference type="PhylomeDB" id="O60673"/>
<dbReference type="TreeFam" id="TF101072"/>
<dbReference type="PathwayCommons" id="O60673"/>
<dbReference type="Reactome" id="R-HSA-110312">
    <property type="pathway name" value="Translesion synthesis by REV1"/>
</dbReference>
<dbReference type="Reactome" id="R-HSA-5655862">
    <property type="pathway name" value="Translesion synthesis by POLK"/>
</dbReference>
<dbReference type="Reactome" id="R-HSA-5656121">
    <property type="pathway name" value="Translesion synthesis by POLI"/>
</dbReference>
<dbReference type="SignaLink" id="O60673"/>
<dbReference type="BioGRID-ORCS" id="5980">
    <property type="hits" value="475 hits in 1159 CRISPR screens"/>
</dbReference>
<dbReference type="ChiTaRS" id="REV3L">
    <property type="organism name" value="human"/>
</dbReference>
<dbReference type="EvolutionaryTrace" id="O60673"/>
<dbReference type="GeneWiki" id="REV3L"/>
<dbReference type="GenomeRNAi" id="5980"/>
<dbReference type="Pharos" id="O60673">
    <property type="development level" value="Tbio"/>
</dbReference>
<dbReference type="PRO" id="PR:O60673"/>
<dbReference type="Proteomes" id="UP000005640">
    <property type="component" value="Chromosome 6"/>
</dbReference>
<dbReference type="RNAct" id="O60673">
    <property type="molecule type" value="protein"/>
</dbReference>
<dbReference type="Bgee" id="ENSG00000009413">
    <property type="expression patterns" value="Expressed in calcaneal tendon and 206 other cell types or tissues"/>
</dbReference>
<dbReference type="ExpressionAtlas" id="O60673">
    <property type="expression patterns" value="baseline and differential"/>
</dbReference>
<dbReference type="GO" id="GO:0005730">
    <property type="term" value="C:nucleolus"/>
    <property type="evidence" value="ECO:0007669"/>
    <property type="project" value="Ensembl"/>
</dbReference>
<dbReference type="GO" id="GO:0005654">
    <property type="term" value="C:nucleoplasm"/>
    <property type="evidence" value="ECO:0000304"/>
    <property type="project" value="Reactome"/>
</dbReference>
<dbReference type="GO" id="GO:0005634">
    <property type="term" value="C:nucleus"/>
    <property type="evidence" value="ECO:0000318"/>
    <property type="project" value="GO_Central"/>
</dbReference>
<dbReference type="GO" id="GO:0016035">
    <property type="term" value="C:zeta DNA polymerase complex"/>
    <property type="evidence" value="ECO:0000314"/>
    <property type="project" value="UniProtKB"/>
</dbReference>
<dbReference type="GO" id="GO:0051539">
    <property type="term" value="F:4 iron, 4 sulfur cluster binding"/>
    <property type="evidence" value="ECO:0007669"/>
    <property type="project" value="UniProtKB-KW"/>
</dbReference>
<dbReference type="GO" id="GO:0003677">
    <property type="term" value="F:DNA binding"/>
    <property type="evidence" value="ECO:0007669"/>
    <property type="project" value="UniProtKB-KW"/>
</dbReference>
<dbReference type="GO" id="GO:0003887">
    <property type="term" value="F:DNA-directed DNA polymerase activity"/>
    <property type="evidence" value="ECO:0000318"/>
    <property type="project" value="GO_Central"/>
</dbReference>
<dbReference type="GO" id="GO:0000166">
    <property type="term" value="F:nucleotide binding"/>
    <property type="evidence" value="ECO:0007669"/>
    <property type="project" value="InterPro"/>
</dbReference>
<dbReference type="GO" id="GO:0008270">
    <property type="term" value="F:zinc ion binding"/>
    <property type="evidence" value="ECO:0007669"/>
    <property type="project" value="UniProtKB-KW"/>
</dbReference>
<dbReference type="GO" id="GO:0006261">
    <property type="term" value="P:DNA-templated DNA replication"/>
    <property type="evidence" value="ECO:0000304"/>
    <property type="project" value="ProtInc"/>
</dbReference>
<dbReference type="GO" id="GO:0000724">
    <property type="term" value="P:double-strand break repair via homologous recombination"/>
    <property type="evidence" value="ECO:0000318"/>
    <property type="project" value="GO_Central"/>
</dbReference>
<dbReference type="GO" id="GO:0042276">
    <property type="term" value="P:error-prone translesion synthesis"/>
    <property type="evidence" value="ECO:0000314"/>
    <property type="project" value="ComplexPortal"/>
</dbReference>
<dbReference type="CDD" id="cd05778">
    <property type="entry name" value="DNA_polB_zeta_exo"/>
    <property type="match status" value="1"/>
</dbReference>
<dbReference type="CDD" id="cd05534">
    <property type="entry name" value="POLBc_zeta"/>
    <property type="match status" value="1"/>
</dbReference>
<dbReference type="CDD" id="cd22287">
    <property type="entry name" value="REV3L_RBD"/>
    <property type="match status" value="1"/>
</dbReference>
<dbReference type="FunFam" id="1.10.287.690:FF:000002">
    <property type="entry name" value="DNA polymerase zeta"/>
    <property type="match status" value="1"/>
</dbReference>
<dbReference type="FunFam" id="3.30.420.10:FF:000024">
    <property type="entry name" value="DNA polymerase zeta catalytic subunit"/>
    <property type="match status" value="1"/>
</dbReference>
<dbReference type="FunFam" id="3.30.342.10:FF:000002">
    <property type="entry name" value="DNA polymerase zeta catalytic subunit isoform X1"/>
    <property type="match status" value="1"/>
</dbReference>
<dbReference type="FunFam" id="1.10.132.60:FF:000005">
    <property type="entry name" value="Putative DNA polymerase zeta catalytic subunit"/>
    <property type="match status" value="1"/>
</dbReference>
<dbReference type="Gene3D" id="1.10.132.60">
    <property type="entry name" value="DNA polymerase family B, C-terminal domain"/>
    <property type="match status" value="1"/>
</dbReference>
<dbReference type="Gene3D" id="3.30.342.10">
    <property type="entry name" value="DNA Polymerase, chain B, domain 1"/>
    <property type="match status" value="1"/>
</dbReference>
<dbReference type="Gene3D" id="1.10.287.690">
    <property type="entry name" value="Helix hairpin bin"/>
    <property type="match status" value="1"/>
</dbReference>
<dbReference type="Gene3D" id="3.90.1600.10">
    <property type="entry name" value="Palm domain of DNA polymerase"/>
    <property type="match status" value="1"/>
</dbReference>
<dbReference type="Gene3D" id="3.30.420.10">
    <property type="entry name" value="Ribonuclease H-like superfamily/Ribonuclease H"/>
    <property type="match status" value="1"/>
</dbReference>
<dbReference type="IDEAL" id="IID00259"/>
<dbReference type="InterPro" id="IPR006172">
    <property type="entry name" value="DNA-dir_DNA_pol_B"/>
</dbReference>
<dbReference type="InterPro" id="IPR017964">
    <property type="entry name" value="DNA-dir_DNA_pol_B_CS"/>
</dbReference>
<dbReference type="InterPro" id="IPR006133">
    <property type="entry name" value="DNA-dir_DNA_pol_B_exonuc"/>
</dbReference>
<dbReference type="InterPro" id="IPR006134">
    <property type="entry name" value="DNA-dir_DNA_pol_B_multi_dom"/>
</dbReference>
<dbReference type="InterPro" id="IPR043502">
    <property type="entry name" value="DNA/RNA_pol_sf"/>
</dbReference>
<dbReference type="InterPro" id="IPR042087">
    <property type="entry name" value="DNA_pol_B_thumb"/>
</dbReference>
<dbReference type="InterPro" id="IPR023211">
    <property type="entry name" value="DNA_pol_palm_dom_sf"/>
</dbReference>
<dbReference type="InterPro" id="IPR056435">
    <property type="entry name" value="DPOD/Z_N"/>
</dbReference>
<dbReference type="InterPro" id="IPR032757">
    <property type="entry name" value="DUF4683"/>
</dbReference>
<dbReference type="InterPro" id="IPR030559">
    <property type="entry name" value="PolZ_Rev3"/>
</dbReference>
<dbReference type="InterPro" id="IPR056447">
    <property type="entry name" value="REV3_N"/>
</dbReference>
<dbReference type="InterPro" id="IPR012337">
    <property type="entry name" value="RNaseH-like_sf"/>
</dbReference>
<dbReference type="InterPro" id="IPR036397">
    <property type="entry name" value="RNaseH_sf"/>
</dbReference>
<dbReference type="InterPro" id="IPR025687">
    <property type="entry name" value="Znf-C4pol"/>
</dbReference>
<dbReference type="PANTHER" id="PTHR45812">
    <property type="entry name" value="DNA POLYMERASE ZETA CATALYTIC SUBUNIT"/>
    <property type="match status" value="1"/>
</dbReference>
<dbReference type="PANTHER" id="PTHR45812:SF1">
    <property type="entry name" value="DNA POLYMERASE ZETA CATALYTIC SUBUNIT"/>
    <property type="match status" value="1"/>
</dbReference>
<dbReference type="Pfam" id="PF00136">
    <property type="entry name" value="DNA_pol_B"/>
    <property type="match status" value="1"/>
</dbReference>
<dbReference type="Pfam" id="PF03104">
    <property type="entry name" value="DNA_pol_B_exo1"/>
    <property type="match status" value="1"/>
</dbReference>
<dbReference type="Pfam" id="PF15735">
    <property type="entry name" value="DUF4683"/>
    <property type="match status" value="1"/>
</dbReference>
<dbReference type="Pfam" id="PF24055">
    <property type="entry name" value="POL3_N"/>
    <property type="match status" value="1"/>
</dbReference>
<dbReference type="Pfam" id="PF24065">
    <property type="entry name" value="REV3_N"/>
    <property type="match status" value="1"/>
</dbReference>
<dbReference type="Pfam" id="PF14260">
    <property type="entry name" value="zf-C4pol"/>
    <property type="match status" value="1"/>
</dbReference>
<dbReference type="PRINTS" id="PR00106">
    <property type="entry name" value="DNAPOLB"/>
</dbReference>
<dbReference type="SMART" id="SM00486">
    <property type="entry name" value="POLBc"/>
    <property type="match status" value="1"/>
</dbReference>
<dbReference type="SUPFAM" id="SSF56672">
    <property type="entry name" value="DNA/RNA polymerases"/>
    <property type="match status" value="1"/>
</dbReference>
<dbReference type="SUPFAM" id="SSF53098">
    <property type="entry name" value="Ribonuclease H-like"/>
    <property type="match status" value="1"/>
</dbReference>
<dbReference type="PROSITE" id="PS00116">
    <property type="entry name" value="DNA_POLYMERASE_B"/>
    <property type="match status" value="1"/>
</dbReference>
<comment type="function">
    <text evidence="8">Catalytic subunit of the DNA polymerase zeta complex, an error-prone polymerase specialized in translesion DNA synthesis (TLS). Lacks an intrinsic 3'-5' exonuclease activity and thus has no proofreading function.</text>
</comment>
<comment type="catalytic activity">
    <reaction>
        <text>DNA(n) + a 2'-deoxyribonucleoside 5'-triphosphate = DNA(n+1) + diphosphate</text>
        <dbReference type="Rhea" id="RHEA:22508"/>
        <dbReference type="Rhea" id="RHEA-COMP:17339"/>
        <dbReference type="Rhea" id="RHEA-COMP:17340"/>
        <dbReference type="ChEBI" id="CHEBI:33019"/>
        <dbReference type="ChEBI" id="CHEBI:61560"/>
        <dbReference type="ChEBI" id="CHEBI:173112"/>
        <dbReference type="EC" id="2.7.7.7"/>
    </reaction>
</comment>
<comment type="cofactor">
    <cofactor evidence="2">
        <name>[4Fe-4S] cluster</name>
        <dbReference type="ChEBI" id="CHEBI:49883"/>
    </cofactor>
    <text evidence="2">Binds 1 [4Fe-4S] cluster.</text>
</comment>
<comment type="biophysicochemical properties">
    <kinetics>
        <KM>5.71 uM for dATP (for Pol-zeta2)</KM>
        <KM>1.17 uM for dATP (for Pol-zeta4)</KM>
        <text evidence="8">kcat is 0.31 min(-1) for DNA synthesis by Pol-zeta4. kcat is 0.05 min(-1) for DNA synthesis by Pol-zeta2.</text>
    </kinetics>
</comment>
<comment type="subunit">
    <text evidence="6 7 8">Heterodimer with MAD2L2. This dimer forms the minimal DNA polymerase zeta complex (Pol-zeta2), with REV3L bearing DNA polymerase catalytic activity, although its activity is very low in this context. Component of the tetrameric Pol-zeta complex (Pol-zeta4), which consists of REV3L, MAD2L2, POLD2 and POLD3; Pol-zeta4 is the fully active form of DNA polymerase zeta.</text>
</comment>
<comment type="interaction">
    <interactant intactId="EBI-2871302">
        <id>O60673</id>
    </interactant>
    <interactant intactId="EBI-77889">
        <id>Q9UI95</id>
        <label>MAD2L2</label>
    </interactant>
    <organismsDiffer>false</organismsDiffer>
    <experiments>5</experiments>
</comment>
<comment type="subcellular location">
    <subcellularLocation>
        <location evidence="14">Nucleus</location>
    </subcellularLocation>
</comment>
<comment type="alternative products">
    <event type="alternative splicing"/>
    <isoform>
        <id>O60673-1</id>
        <name>1</name>
        <sequence type="displayed"/>
    </isoform>
    <isoform>
        <id>O60673-2</id>
        <name>2</name>
        <sequence type="described" ref="VSP_024121"/>
    </isoform>
</comment>
<comment type="tissue specificity">
    <text>Ubiquitously expressed.</text>
</comment>
<comment type="domain">
    <text>Its C-terminal part could serve as the catalytic domain during nucleotide polymerization, while its N-terminal part could provide sites for protein-protein interactions with other factors during translesion DNA synthesis.</text>
</comment>
<comment type="domain">
    <text evidence="1">The CysB motif binds 1 4Fe-4S cluster and is required for the formation of polymerase complexes.</text>
</comment>
<comment type="similarity">
    <text evidence="14">Belongs to the DNA polymerase type-B family.</text>
</comment>
<sequence length="3130" mass="352776">MFSVRIVTADYYMASPLQGLDTCQSPLTQAPVKKVPVVRVFGATPAGQKTCLHLHGIFPYLYVPYDGYGQQPESYLSQMAFSIDRALNVALGNPSSTAQHVFKVSLVSGMPFYGYHEKERHFMKIYLYNPTMVKRICELLQSGAIMNKFYQPHEAHIPYLLQLFIDYNLYGMNLINLAAVKFRKARRKSNTLHATGSCKNHLSGNSLADTLFRWEQDEIPSSLILEGVEPQSTCELEVDAVAADILNRLDIEAQIGGNPGLQAIWEDEKQRRRNRNETSQMSQPESQDHRFVPATESEKKFQKRLQEILKQNDFSVTLSGSVDYSDGSQEFSAELTLHSEVLSPEMLQCTPANMVEVHKDKESSKGHTRHKVEEALINEEAILNLMENSQTFQPLTQRLSESPVFMDSSPDEALVHLLAGLESDGYRGERNRMPSPCRSFGNNKYPQNSDDEENEPQIEKEEMELSLVMSQRWDSNIEEHCAKKRSLCRNTHRSSTEDDDSSSGEEMEWSDNSLLLASLSIPQLDGTADENSDNPLNNENSRTHSSVIATSKLSVKPSIFHKDAATLEPSSSAKITFQCKHTSALSSHVLNKEDLIEDLSQTNKNTEKGLDNSVTSFTNESTYSMKYPGSLSSTVHSENSHKENSKKEILPVSSCESSIFDYEEDIPSVTRQVPSRKYTNIRKIEKDSPFIHMHRHPNENTLGKNSFNFSDLNHSKNKVSSEGNEKGNSTALSSLFPSSFTENCELLSCSGENRTMVHSLNSTADESGLNKLKIRYEEFQEHKTEKPSLSQQAAHYMFFPSVVLSNCLTRPQKLSPVTYKLQPGNKPSRLKLNKRKLAGHQETSTKSSETGSTKDNFIQNNPCNSNPEKDNALASDLTKTTRGAFENKTPTDGFIDCHFGDGTLETEQSFGLYGNKYTLRAKRKVNYETEDSESSFVTHNSKISLPHPMEIGESLDGTLKSRKRRKMSKKLPPVIIKYIIINRFRGRKNMLVKLGKIDSKEKQVILTEEKMELYKKLAPLKDFWPKVPDSPATKYPIYPLTPKKSHRRKSKHKSAKKKTGKQQRTNNENIKRTLSFRKKRSHAILSPPSPSYNAETEDCDLNYSDVMSKLGFLSERSTSPINSSPPRCWSPTDPRAEEIMAAAEKEAMLFKGPNVYKKTVNSRIGKTSRARAQIKKSKAKLANPSIVTKKRNKRNQTNKLVDDGKKKPRAKQKTNEKGTSRKHTTLKDEKIKSQSGAEVKFVLKHQNVSEFASSSGGSQLLFKQKDMPLMGSAVDHPLSASLPTGINAQQKLSGCFSSFLESKKSVDLQTFPSSRDDLHPSVVCNSIGPGVSKINVQRPHNQSAMFTLKESTLIQKNIFDLSNHLSQVAQNTQISSGMSSKIEDNANNIQRNYLSSIGKLSEYRNSLESKLDQAYTPNFLHCKDSQQQIVCIAEQSKHSETCSPGNTASEESQMPNNCFVTSLRSPIKQIAWEQKQRGFILDMSNFKPERVKPRSLSEAISQTKALSQCKNRNVSTPSAFGEGQSGLAVLKELLQKRQQKAQNANTTQDPLSNKHQPNKNISGSLEHNKANKRTRSVTSPRKPRTPRSTKQKEKIPKLLKVDSLNLQNSSQLDNSVSDDSPIFFSDPGFESCYSLEDSLSPEHNYNFDINTIGQTGFCSFYSGSQFVPADQNLPQKFLSDAVQDLFPGQAIEKNEFLSHDNQKCDEDKHHTTDSASWIRSGTLSPEIFEKSTIDSNENRRHNQWKNSFHPLTTRSNSIMDSFCVQQAEDCLSEKSRLNRSSVSKEVFLSLPQPNNSDWIQGHTRKEMGQSLDSANTSFTAILSSPDGELVDVACEDLELYVSRNNDMLTPTPDSSPRSTSSPSQSKNGSFTPRTANILKPLMSPPSREEIMATLLDHDLSETIYQEPFCSNPSDVPEKPREIGGRLLMVETRLANDLAEFEGDFSLEGLRLWKTAFSAMTQNPRPGSPLRSGQGVVNKGSSNSPKMVEDKKIVIMPCKCAPSRQLVQVWLQAKEEYERSKKLPKTKPTGVVKSAENFSSSVNPDDKPVVPPKMDVSPCILPTTAHTKEDVDNSQIALQAPTTGCSQTASESQMLPPVASASDPEKDEDDDDNYYISYSSPDSPVIPPWQQPISPDSKALNGDDRPSSPVEELPSLAFENFLKPIKDGIQKSPCSEPQEPLVISPINTRARTGKCESLCFHSTPIIQRKLLERLPEAPGLSPLSTEPKTQKLSNKKGSNTDTLRRVLLTQAKNQFAAVNTPQKETSQIDGPSLNNTYGFKVSIQNLQEAKALHEIQNLTLISVELHARTRRDLEPDPEFDPICALFYCISSDTPLPDTEKTELTGVIVIDKDKTVFSQDIRYQTPLLIRSGITGLEVTYAADEKALFHEIANIIKRYDPDILLGYEIQMHSWGYLLQRAAALSIDLCRMISRVPDDKIENRFAAERDEYGSYTMSEINIVGRITLNLWRIMRNEVALTNYTFENVSFHVLHQRFPLFTFRVLSDWFDNKTDLYRWKMVDHYVSRVRGNLQMLEQLDLIGKTSEMARLFGIQFLHVLTRGSQYRVESMMLRIAKPMNYIPVTPSVQQRSQMRAPQCVPLIMEPESRFYSNSVLVLDFQSLYPSIVIAYNYCFSTCLGHVENLGKYDEFKFGCTSLRVPPDLLYQVRHDITVSPNGVAFVKPSVRKGVLPRMLEEILKTRFMVKQSMKAYKQDRALSRMLDARQLGLKLIANVTFGYTSANFSGRMPCIEVGDSIVHKARETLERAIKLVNDTKKWGARVVYGDTDSMFVLLKGATKEQSFKIGQEIAEAVTATNPKPVKLKFEKVYLPCVLQTKKRYVGYMYETLDQKDPVFDAKGIETVRRDSCPAVSKILERSLKLLFETRDISLIKQYVQRQCMKLLEGKASIQDFIFAKEYRGSFSYKPGACVPALELTRKMLTYDRRSEPQVGERVPYVIIYGTPGVPLIQLVRRPVEVLQDPTLRLNATYYITKQILPPLARIFSLIGIDVFSWYHELPRIHKATSSSRSEPEGRKGTISQYFTTLHCPVCDDLTQHGICSKCRSQPQHVAVILNQEIRELERQQEQLVKICKNCTGCFDRHIPCVSLNCPVLFKLSRVNRELSKAPYLRQLLDQF</sequence>
<gene>
    <name type="primary">REV3L</name>
    <name type="synonym">POLZ</name>
    <name type="synonym">REV3</name>
</gene>
<evidence type="ECO:0000250" key="1"/>
<evidence type="ECO:0000250" key="2">
    <source>
        <dbReference type="UniProtKB" id="P14284"/>
    </source>
</evidence>
<evidence type="ECO:0000250" key="3">
    <source>
        <dbReference type="UniProtKB" id="P15436"/>
    </source>
</evidence>
<evidence type="ECO:0000256" key="4">
    <source>
        <dbReference type="SAM" id="MobiDB-lite"/>
    </source>
</evidence>
<evidence type="ECO:0000269" key="5">
    <source>
    </source>
</evidence>
<evidence type="ECO:0000269" key="6">
    <source>
    </source>
</evidence>
<evidence type="ECO:0000269" key="7">
    <source>
    </source>
</evidence>
<evidence type="ECO:0000269" key="8">
    <source>
    </source>
</evidence>
<evidence type="ECO:0000269" key="9">
    <source>
    </source>
</evidence>
<evidence type="ECO:0000269" key="10">
    <source>
    </source>
</evidence>
<evidence type="ECO:0000269" key="11">
    <source ref="3"/>
</evidence>
<evidence type="ECO:0000269" key="12">
    <source ref="5"/>
</evidence>
<evidence type="ECO:0000303" key="13">
    <source>
    </source>
</evidence>
<evidence type="ECO:0000305" key="14"/>
<evidence type="ECO:0007744" key="15">
    <source>
    </source>
</evidence>
<evidence type="ECO:0007744" key="16">
    <source>
    </source>
</evidence>
<evidence type="ECO:0007829" key="17">
    <source>
        <dbReference type="PDB" id="5O8K"/>
    </source>
</evidence>
<evidence type="ECO:0007829" key="18">
    <source>
        <dbReference type="PDB" id="6BCD"/>
    </source>
</evidence>
<reference key="1">
    <citation type="journal article" date="1998" name="Proc. Natl. Acad. Sci. U.S.A.">
        <title>A human homolog of the Saccharomyces cerevisiae REV3 gene, which encodes the catalytic subunit of DNA polymerase zeta.</title>
        <authorList>
            <person name="Gibbs P.E.M."/>
            <person name="McGregor W.G."/>
            <person name="Maher V.M."/>
            <person name="Nisson P."/>
            <person name="Lawrence C.W."/>
        </authorList>
    </citation>
    <scope>NUCLEOTIDE SEQUENCE [MRNA] (ISOFORM 1)</scope>
    <scope>VARIANT ILE-1224</scope>
    <source>
        <tissue>Fetal brain</tissue>
    </source>
</reference>
<reference key="2">
    <citation type="journal article" date="1999" name="Mutat. Res.">
        <title>A full-length cDNA of hREV3 is predicted to encode DNA polymerase zeta for damage-induced mutagenesis in humans.</title>
        <authorList>
            <person name="Lin W."/>
            <person name="Wu X."/>
            <person name="Wang Z."/>
        </authorList>
    </citation>
    <scope>NUCLEOTIDE SEQUENCE [MRNA] (ISOFORM 1)</scope>
    <scope>VARIANT ILE-1224</scope>
    <source>
        <tissue>Bone marrow</tissue>
        <tissue>Leukocyte</tissue>
    </source>
</reference>
<reference key="3">
    <citation type="submission" date="1999-06" db="EMBL/GenBank/DDBJ databases">
        <title>Cloning and characterization of hREV3, the human homolog of S. cerevisiae REV3.</title>
        <authorList>
            <person name="Murakumo Y."/>
            <person name="Rasio D."/>
            <person name="Roth T."/>
            <person name="Negrini M."/>
            <person name="Croce C.M."/>
            <person name="Fishel R."/>
        </authorList>
    </citation>
    <scope>NUCLEOTIDE SEQUENCE [MRNA] (ISOFORM 1)</scope>
    <scope>VARIANT ILE-1224</scope>
</reference>
<reference key="4">
    <citation type="journal article" date="1998" name="Cytogenet. Cell Genet.">
        <title>Alternative splicing, genomic structure, and fine chromosome localization of REV3L.</title>
        <authorList>
            <person name="Morelli C."/>
            <person name="Mungall A.J."/>
            <person name="Negrini M."/>
            <person name="Barbanti-Brodano G."/>
            <person name="Croce C.M."/>
        </authorList>
    </citation>
    <scope>NUCLEOTIDE SEQUENCE [MRNA] (ISOFORM 2)</scope>
    <scope>VARIANTS HIS-231; CYS-1156; ILE-1224 AND GLU-1540</scope>
    <source>
        <tissue>Testis</tissue>
    </source>
</reference>
<reference key="5">
    <citation type="submission" date="2004-07" db="EMBL/GenBank/DDBJ databases">
        <authorList>
            <consortium name="NIEHS SNPs program"/>
        </authorList>
    </citation>
    <scope>NUCLEOTIDE SEQUENCE [GENOMIC DNA]</scope>
    <scope>VARIANTS PRO-397; THR-693; GLN-962; CYS-1156; ILE-1224; THR-1302; HIS-1309; THR-1339; PRO-1469; LEU-1576; ASN-1713; THR-1724; SER-1791; HIS-1812; ARG-1923; HIS-1970; VAL-2015; MET-2075; GLN-2762 AND ILE-3064</scope>
</reference>
<reference key="6">
    <citation type="journal article" date="2003" name="Nature">
        <title>The DNA sequence and analysis of human chromosome 6.</title>
        <authorList>
            <person name="Mungall A.J."/>
            <person name="Palmer S.A."/>
            <person name="Sims S.K."/>
            <person name="Edwards C.A."/>
            <person name="Ashurst J.L."/>
            <person name="Wilming L."/>
            <person name="Jones M.C."/>
            <person name="Horton R."/>
            <person name="Hunt S.E."/>
            <person name="Scott C.E."/>
            <person name="Gilbert J.G.R."/>
            <person name="Clamp M.E."/>
            <person name="Bethel G."/>
            <person name="Milne S."/>
            <person name="Ainscough R."/>
            <person name="Almeida J.P."/>
            <person name="Ambrose K.D."/>
            <person name="Andrews T.D."/>
            <person name="Ashwell R.I.S."/>
            <person name="Babbage A.K."/>
            <person name="Bagguley C.L."/>
            <person name="Bailey J."/>
            <person name="Banerjee R."/>
            <person name="Barker D.J."/>
            <person name="Barlow K.F."/>
            <person name="Bates K."/>
            <person name="Beare D.M."/>
            <person name="Beasley H."/>
            <person name="Beasley O."/>
            <person name="Bird C.P."/>
            <person name="Blakey S.E."/>
            <person name="Bray-Allen S."/>
            <person name="Brook J."/>
            <person name="Brown A.J."/>
            <person name="Brown J.Y."/>
            <person name="Burford D.C."/>
            <person name="Burrill W."/>
            <person name="Burton J."/>
            <person name="Carder C."/>
            <person name="Carter N.P."/>
            <person name="Chapman J.C."/>
            <person name="Clark S.Y."/>
            <person name="Clark G."/>
            <person name="Clee C.M."/>
            <person name="Clegg S."/>
            <person name="Cobley V."/>
            <person name="Collier R.E."/>
            <person name="Collins J.E."/>
            <person name="Colman L.K."/>
            <person name="Corby N.R."/>
            <person name="Coville G.J."/>
            <person name="Culley K.M."/>
            <person name="Dhami P."/>
            <person name="Davies J."/>
            <person name="Dunn M."/>
            <person name="Earthrowl M.E."/>
            <person name="Ellington A.E."/>
            <person name="Evans K.A."/>
            <person name="Faulkner L."/>
            <person name="Francis M.D."/>
            <person name="Frankish A."/>
            <person name="Frankland J."/>
            <person name="French L."/>
            <person name="Garner P."/>
            <person name="Garnett J."/>
            <person name="Ghori M.J."/>
            <person name="Gilby L.M."/>
            <person name="Gillson C.J."/>
            <person name="Glithero R.J."/>
            <person name="Grafham D.V."/>
            <person name="Grant M."/>
            <person name="Gribble S."/>
            <person name="Griffiths C."/>
            <person name="Griffiths M.N.D."/>
            <person name="Hall R."/>
            <person name="Halls K.S."/>
            <person name="Hammond S."/>
            <person name="Harley J.L."/>
            <person name="Hart E.A."/>
            <person name="Heath P.D."/>
            <person name="Heathcott R."/>
            <person name="Holmes S.J."/>
            <person name="Howden P.J."/>
            <person name="Howe K.L."/>
            <person name="Howell G.R."/>
            <person name="Huckle E."/>
            <person name="Humphray S.J."/>
            <person name="Humphries M.D."/>
            <person name="Hunt A.R."/>
            <person name="Johnson C.M."/>
            <person name="Joy A.A."/>
            <person name="Kay M."/>
            <person name="Keenan S.J."/>
            <person name="Kimberley A.M."/>
            <person name="King A."/>
            <person name="Laird G.K."/>
            <person name="Langford C."/>
            <person name="Lawlor S."/>
            <person name="Leongamornlert D.A."/>
            <person name="Leversha M."/>
            <person name="Lloyd C.R."/>
            <person name="Lloyd D.M."/>
            <person name="Loveland J.E."/>
            <person name="Lovell J."/>
            <person name="Martin S."/>
            <person name="Mashreghi-Mohammadi M."/>
            <person name="Maslen G.L."/>
            <person name="Matthews L."/>
            <person name="McCann O.T."/>
            <person name="McLaren S.J."/>
            <person name="McLay K."/>
            <person name="McMurray A."/>
            <person name="Moore M.J.F."/>
            <person name="Mullikin J.C."/>
            <person name="Niblett D."/>
            <person name="Nickerson T."/>
            <person name="Novik K.L."/>
            <person name="Oliver K."/>
            <person name="Overton-Larty E.K."/>
            <person name="Parker A."/>
            <person name="Patel R."/>
            <person name="Pearce A.V."/>
            <person name="Peck A.I."/>
            <person name="Phillimore B.J.C.T."/>
            <person name="Phillips S."/>
            <person name="Plumb R.W."/>
            <person name="Porter K.M."/>
            <person name="Ramsey Y."/>
            <person name="Ranby S.A."/>
            <person name="Rice C.M."/>
            <person name="Ross M.T."/>
            <person name="Searle S.M."/>
            <person name="Sehra H.K."/>
            <person name="Sheridan E."/>
            <person name="Skuce C.D."/>
            <person name="Smith S."/>
            <person name="Smith M."/>
            <person name="Spraggon L."/>
            <person name="Squares S.L."/>
            <person name="Steward C.A."/>
            <person name="Sycamore N."/>
            <person name="Tamlyn-Hall G."/>
            <person name="Tester J."/>
            <person name="Theaker A.J."/>
            <person name="Thomas D.W."/>
            <person name="Thorpe A."/>
            <person name="Tracey A."/>
            <person name="Tromans A."/>
            <person name="Tubby B."/>
            <person name="Wall M."/>
            <person name="Wallis J.M."/>
            <person name="West A.P."/>
            <person name="White S.S."/>
            <person name="Whitehead S.L."/>
            <person name="Whittaker H."/>
            <person name="Wild A."/>
            <person name="Willey D.J."/>
            <person name="Wilmer T.E."/>
            <person name="Wood J.M."/>
            <person name="Wray P.W."/>
            <person name="Wyatt J.C."/>
            <person name="Young L."/>
            <person name="Younger R.M."/>
            <person name="Bentley D.R."/>
            <person name="Coulson A."/>
            <person name="Durbin R.M."/>
            <person name="Hubbard T."/>
            <person name="Sulston J.E."/>
            <person name="Dunham I."/>
            <person name="Rogers J."/>
            <person name="Beck S."/>
        </authorList>
    </citation>
    <scope>NUCLEOTIDE SEQUENCE [LARGE SCALE GENOMIC DNA]</scope>
</reference>
<reference key="7">
    <citation type="journal article" date="2000" name="J. Biol. Chem.">
        <title>A human REV7 homolog that interacts with the polymerase zeta catalytic subunit hREV3 and the spindle assembly checkpoint protein hMAD2.</title>
        <authorList>
            <person name="Murakumo Y."/>
            <person name="Roth T."/>
            <person name="Ishii H."/>
            <person name="Rasio D."/>
            <person name="Numata S."/>
            <person name="Croce C.M."/>
            <person name="Fishel R."/>
        </authorList>
    </citation>
    <scope>NUCLEOTIDE SEQUENCE [MRNA] OF 70-3130 (ISOFORM 1)</scope>
    <scope>VARIANTS HIS-231; CYS-1156; ILE-1224 AND GLU-1540</scope>
    <scope>INTERACTION WITH MAD2L2</scope>
</reference>
<reference key="8">
    <citation type="journal article" date="2009" name="Sci. Signal.">
        <title>Quantitative phosphoproteomic analysis of T cell receptor signaling reveals system-wide modulation of protein-protein interactions.</title>
        <authorList>
            <person name="Mayya V."/>
            <person name="Lundgren D.H."/>
            <person name="Hwang S.-I."/>
            <person name="Rezaul K."/>
            <person name="Wu L."/>
            <person name="Eng J.K."/>
            <person name="Rodionov V."/>
            <person name="Han D.K."/>
        </authorList>
    </citation>
    <scope>PHOSPHORYLATION [LARGE SCALE ANALYSIS] AT SER-1030 AND THR-1041</scope>
    <scope>IDENTIFICATION BY MASS SPECTROMETRY [LARGE SCALE ANALYSIS]</scope>
    <source>
        <tissue>Leukemic T-cell</tissue>
    </source>
</reference>
<reference key="9">
    <citation type="journal article" date="2013" name="J. Proteome Res.">
        <title>Toward a comprehensive characterization of a human cancer cell phosphoproteome.</title>
        <authorList>
            <person name="Zhou H."/>
            <person name="Di Palma S."/>
            <person name="Preisinger C."/>
            <person name="Peng M."/>
            <person name="Polat A.N."/>
            <person name="Heck A.J."/>
            <person name="Mohammed S."/>
        </authorList>
    </citation>
    <scope>PHOSPHORYLATION [LARGE SCALE ANALYSIS] AT SER-1724 AND SER-1967</scope>
    <scope>IDENTIFICATION BY MASS SPECTROMETRY [LARGE SCALE ANALYSIS]</scope>
    <source>
        <tissue>Cervix carcinoma</tissue>
        <tissue>Erythroleukemia</tissue>
    </source>
</reference>
<reference key="10">
    <citation type="journal article" date="2014" name="Proc. Natl. Acad. Sci. U.S.A.">
        <title>Human Pol zeta purified with accessory subunits is active in translesion DNA synthesis and complements Pol eta in cisplatin bypass.</title>
        <authorList>
            <person name="Lee Y.S."/>
            <person name="Gregory M.T."/>
            <person name="Yang W."/>
        </authorList>
    </citation>
    <scope>FUNCTION</scope>
    <scope>IDENTIFICATION IN POL-ZETA COMPLEX</scope>
    <scope>MUTAGENESIS OF ASP-2614 AND ASP-2783</scope>
</reference>
<reference key="11">
    <citation type="journal article" date="2010" name="J. Biol. Chem.">
        <title>Crystal structure of human REV7 in complex with a human REV3 fragment and structural implication of the interaction between DNA polymerase zeta and REV1.</title>
        <authorList>
            <person name="Hara K."/>
            <person name="Hashimoto H."/>
            <person name="Murakumo Y."/>
            <person name="Kobayashi S."/>
            <person name="Kogame T."/>
            <person name="Unzai S."/>
            <person name="Akashi S."/>
            <person name="Takeda S."/>
            <person name="Shimizu T."/>
            <person name="Sato M."/>
        </authorList>
    </citation>
    <scope>X-RAY CRYSTALLOGRAPHY (1.90 ANGSTROMS) OF 1847-1898 IN COMPLEX WITH MAD2L2</scope>
</reference>
<accession>O60673</accession>
<accession>O43214</accession>
<accession>Q5TC33</accession>
<name>REV3L_HUMAN</name>
<feature type="chain" id="PRO_0000046468" description="DNA polymerase zeta catalytic subunit">
    <location>
        <begin position="1"/>
        <end position="3130"/>
    </location>
</feature>
<feature type="zinc finger region" description="CysA-type">
    <location>
        <begin position="3042"/>
        <end position="3057"/>
    </location>
</feature>
<feature type="region of interest" description="Disordered" evidence="4">
    <location>
        <begin position="263"/>
        <end position="295"/>
    </location>
</feature>
<feature type="region of interest" description="Disordered" evidence="4">
    <location>
        <begin position="425"/>
        <end position="457"/>
    </location>
</feature>
<feature type="region of interest" description="Disordered" evidence="4">
    <location>
        <begin position="487"/>
        <end position="510"/>
    </location>
</feature>
<feature type="region of interest" description="Disordered" evidence="4">
    <location>
        <begin position="524"/>
        <end position="548"/>
    </location>
</feature>
<feature type="region of interest" description="Disordered" evidence="4">
    <location>
        <begin position="697"/>
        <end position="728"/>
    </location>
</feature>
<feature type="region of interest" description="Disordered" evidence="4">
    <location>
        <begin position="817"/>
        <end position="871"/>
    </location>
</feature>
<feature type="region of interest" description="Disordered" evidence="4">
    <location>
        <begin position="1035"/>
        <end position="1095"/>
    </location>
</feature>
<feature type="region of interest" description="Disordered" evidence="4">
    <location>
        <begin position="1162"/>
        <end position="1231"/>
    </location>
</feature>
<feature type="region of interest" description="Disordered" evidence="4">
    <location>
        <begin position="1537"/>
        <end position="1600"/>
    </location>
</feature>
<feature type="region of interest" description="Disordered" evidence="4">
    <location>
        <begin position="1845"/>
        <end position="1882"/>
    </location>
</feature>
<feature type="region of interest" description="Mediates interaction with MAD2L2" evidence="6">
    <location>
        <begin position="1847"/>
        <end position="1898"/>
    </location>
</feature>
<feature type="region of interest" description="Disordered" evidence="4">
    <location>
        <begin position="1962"/>
        <end position="1984"/>
    </location>
</feature>
<feature type="region of interest" description="Disordered" evidence="4">
    <location>
        <begin position="2017"/>
        <end position="2050"/>
    </location>
</feature>
<feature type="region of interest" description="Disordered" evidence="4">
    <location>
        <begin position="2080"/>
        <end position="2150"/>
    </location>
</feature>
<feature type="region of interest" description="Disordered" evidence="4">
    <location>
        <begin position="2216"/>
        <end position="2236"/>
    </location>
</feature>
<feature type="short sequence motif" description="CysB motif">
    <location>
        <begin position="3086"/>
        <end position="3104"/>
    </location>
</feature>
<feature type="compositionally biased region" description="Basic and acidic residues" evidence="4">
    <location>
        <begin position="286"/>
        <end position="295"/>
    </location>
</feature>
<feature type="compositionally biased region" description="Acidic residues" evidence="4">
    <location>
        <begin position="497"/>
        <end position="509"/>
    </location>
</feature>
<feature type="compositionally biased region" description="Polar residues" evidence="4">
    <location>
        <begin position="533"/>
        <end position="548"/>
    </location>
</feature>
<feature type="compositionally biased region" description="Polar residues" evidence="4">
    <location>
        <begin position="699"/>
        <end position="728"/>
    </location>
</feature>
<feature type="compositionally biased region" description="Basic residues" evidence="4">
    <location>
        <begin position="828"/>
        <end position="838"/>
    </location>
</feature>
<feature type="compositionally biased region" description="Low complexity" evidence="4">
    <location>
        <begin position="842"/>
        <end position="854"/>
    </location>
</feature>
<feature type="compositionally biased region" description="Polar residues" evidence="4">
    <location>
        <begin position="855"/>
        <end position="866"/>
    </location>
</feature>
<feature type="compositionally biased region" description="Basic residues" evidence="4">
    <location>
        <begin position="1043"/>
        <end position="1061"/>
    </location>
</feature>
<feature type="compositionally biased region" description="Basic residues" evidence="4">
    <location>
        <begin position="1166"/>
        <end position="1179"/>
    </location>
</feature>
<feature type="compositionally biased region" description="Basic and acidic residues" evidence="4">
    <location>
        <begin position="1213"/>
        <end position="1231"/>
    </location>
</feature>
<feature type="compositionally biased region" description="Polar residues" evidence="4">
    <location>
        <begin position="1540"/>
        <end position="1565"/>
    </location>
</feature>
<feature type="compositionally biased region" description="Basic residues" evidence="4">
    <location>
        <begin position="1570"/>
        <end position="1589"/>
    </location>
</feature>
<feature type="compositionally biased region" description="Basic and acidic residues" evidence="4">
    <location>
        <begin position="1590"/>
        <end position="1600"/>
    </location>
</feature>
<feature type="compositionally biased region" description="Low complexity" evidence="4">
    <location>
        <begin position="1849"/>
        <end position="1865"/>
    </location>
</feature>
<feature type="compositionally biased region" description="Polar residues" evidence="4">
    <location>
        <begin position="2080"/>
        <end position="2092"/>
    </location>
</feature>
<feature type="compositionally biased region" description="Low complexity" evidence="4">
    <location>
        <begin position="2113"/>
        <end position="2122"/>
    </location>
</feature>
<feature type="compositionally biased region" description="Polar residues" evidence="4">
    <location>
        <begin position="2221"/>
        <end position="2236"/>
    </location>
</feature>
<feature type="binding site" evidence="3">
    <location>
        <position position="3042"/>
    </location>
    <ligand>
        <name>Zn(2+)</name>
        <dbReference type="ChEBI" id="CHEBI:29105"/>
    </ligand>
</feature>
<feature type="binding site" evidence="3">
    <location>
        <position position="3045"/>
    </location>
    <ligand>
        <name>Zn(2+)</name>
        <dbReference type="ChEBI" id="CHEBI:29105"/>
    </ligand>
</feature>
<feature type="binding site" evidence="3">
    <location>
        <position position="3054"/>
    </location>
    <ligand>
        <name>Zn(2+)</name>
        <dbReference type="ChEBI" id="CHEBI:29105"/>
    </ligand>
</feature>
<feature type="binding site" evidence="3">
    <location>
        <position position="3057"/>
    </location>
    <ligand>
        <name>Zn(2+)</name>
        <dbReference type="ChEBI" id="CHEBI:29105"/>
    </ligand>
</feature>
<feature type="binding site" evidence="3">
    <location>
        <position position="3086"/>
    </location>
    <ligand>
        <name>[4Fe-4S] cluster</name>
        <dbReference type="ChEBI" id="CHEBI:49883"/>
    </ligand>
</feature>
<feature type="binding site" evidence="3">
    <location>
        <position position="3089"/>
    </location>
    <ligand>
        <name>[4Fe-4S] cluster</name>
        <dbReference type="ChEBI" id="CHEBI:49883"/>
    </ligand>
</feature>
<feature type="binding site" evidence="3">
    <location>
        <position position="3099"/>
    </location>
    <ligand>
        <name>[4Fe-4S] cluster</name>
        <dbReference type="ChEBI" id="CHEBI:49883"/>
    </ligand>
</feature>
<feature type="binding site" evidence="3">
    <location>
        <position position="3104"/>
    </location>
    <ligand>
        <name>[4Fe-4S] cluster</name>
        <dbReference type="ChEBI" id="CHEBI:49883"/>
    </ligand>
</feature>
<feature type="modified residue" description="Phosphoserine" evidence="15">
    <location>
        <position position="1030"/>
    </location>
</feature>
<feature type="modified residue" description="Phosphothreonine" evidence="15">
    <location>
        <position position="1041"/>
    </location>
</feature>
<feature type="modified residue" description="Phosphoserine" evidence="16">
    <location>
        <position position="1724"/>
    </location>
</feature>
<feature type="modified residue" description="Phosphoserine" evidence="16">
    <location>
        <position position="1967"/>
    </location>
</feature>
<feature type="splice variant" id="VSP_024121" description="In isoform 2." evidence="13">
    <location>
        <begin position="1"/>
        <end position="78"/>
    </location>
</feature>
<feature type="sequence variant" id="VAR_008516" description="In dbSNP:rs1053911." evidence="6 10">
    <original>Q</original>
    <variation>H</variation>
    <location>
        <position position="231"/>
    </location>
</feature>
<feature type="sequence variant" id="VAR_008517">
    <original>S</original>
    <variation>T</variation>
    <location>
        <position position="389"/>
    </location>
</feature>
<feature type="sequence variant" id="VAR_022226" description="In dbSNP:rs3218579." evidence="12">
    <original>Q</original>
    <variation>P</variation>
    <location>
        <position position="397"/>
    </location>
</feature>
<feature type="sequence variant" id="VAR_048883" description="In dbSNP:rs3218598.">
    <original>S</original>
    <variation>G</variation>
    <location>
        <position position="633"/>
    </location>
</feature>
<feature type="sequence variant" id="VAR_022227" description="In dbSNP:rs3218593." evidence="12">
    <original>M</original>
    <variation>T</variation>
    <location>
        <position position="693"/>
    </location>
</feature>
<feature type="sequence variant" id="VAR_022228" description="In dbSNP:rs17539588." evidence="12">
    <original>R</original>
    <variation>Q</variation>
    <location>
        <position position="962"/>
    </location>
</feature>
<feature type="sequence variant" id="VAR_022229" description="In dbSNP:rs458017." evidence="6 10 12">
    <original>Y</original>
    <variation>C</variation>
    <location>
        <position position="1156"/>
    </location>
</feature>
<feature type="sequence variant" id="VAR_048884" description="In dbSNP:rs3218600.">
    <original>S</original>
    <variation>L</variation>
    <location>
        <position position="1220"/>
    </location>
</feature>
<feature type="sequence variant" id="VAR_022230" description="In dbSNP:rs462779." evidence="5 6 9 10 11 12">
    <original>T</original>
    <variation>I</variation>
    <location>
        <position position="1224"/>
    </location>
</feature>
<feature type="sequence variant" id="VAR_048885" description="In dbSNP:rs3218578.">
    <original>T</original>
    <variation>P</variation>
    <location>
        <position position="1284"/>
    </location>
</feature>
<feature type="sequence variant" id="VAR_022231" description="In dbSNP:rs3218597." evidence="12">
    <original>S</original>
    <variation>T</variation>
    <location>
        <position position="1302"/>
    </location>
</feature>
<feature type="sequence variant" id="VAR_022232" description="In dbSNP:rs3218595." evidence="12">
    <original>Q</original>
    <variation>H</variation>
    <location>
        <position position="1309"/>
    </location>
</feature>
<feature type="sequence variant" id="VAR_022233" description="In dbSNP:rs17539616." evidence="12">
    <original>P</original>
    <variation>T</variation>
    <location>
        <position position="1339"/>
    </location>
</feature>
<feature type="sequence variant" id="VAR_022234" description="In dbSNP:rs3218572." evidence="12">
    <original>Q</original>
    <variation>P</variation>
    <location>
        <position position="1469"/>
    </location>
</feature>
<feature type="sequence variant" id="VAR_008518" description="In dbSNP:rs1053913." evidence="6 10">
    <original>K</original>
    <variation>E</variation>
    <location>
        <position position="1540"/>
    </location>
</feature>
<feature type="sequence variant" id="VAR_022235" description="In dbSNP:rs3218582." evidence="12">
    <original>S</original>
    <variation>L</variation>
    <location>
        <position position="1576"/>
    </location>
</feature>
<feature type="sequence variant" id="VAR_022236" description="In dbSNP:rs3218585." evidence="12">
    <original>D</original>
    <variation>N</variation>
    <location>
        <position position="1713"/>
    </location>
</feature>
<feature type="sequence variant" id="VAR_022237" description="In dbSNP:rs17539644." evidence="12">
    <original>S</original>
    <variation>T</variation>
    <location>
        <position position="1724"/>
    </location>
</feature>
<feature type="sequence variant" id="VAR_022238" description="In dbSNP:rs17539651." evidence="12">
    <original>P</original>
    <variation>S</variation>
    <location>
        <position position="1791"/>
    </location>
</feature>
<feature type="sequence variant" id="VAR_022239" description="In dbSNP:rs3218599." evidence="12">
    <original>D</original>
    <variation>H</variation>
    <location>
        <position position="1812"/>
    </location>
</feature>
<feature type="sequence variant" id="VAR_022240" description="In dbSNP:rs3218604." evidence="12">
    <original>G</original>
    <variation>R</variation>
    <location>
        <position position="1923"/>
    </location>
</feature>
<feature type="sequence variant" id="VAR_022241" description="In dbSNP:rs3218606." evidence="12">
    <original>R</original>
    <variation>H</variation>
    <location>
        <position position="1970"/>
    </location>
</feature>
<feature type="sequence variant" id="VAR_022242" description="In dbSNP:rs17539692." evidence="12">
    <original>E</original>
    <variation>V</variation>
    <location>
        <position position="2015"/>
    </location>
</feature>
<feature type="sequence variant" id="VAR_022243" description="In dbSNP:rs17510963." evidence="12">
    <original>I</original>
    <variation>M</variation>
    <location>
        <position position="2075"/>
    </location>
</feature>
<feature type="sequence variant" id="VAR_008519">
    <original>S</original>
    <variation>T</variation>
    <location>
        <position position="2607"/>
    </location>
</feature>
<feature type="sequence variant" id="VAR_022244" description="In dbSNP:rs3218592." evidence="12">
    <original>R</original>
    <variation>Q</variation>
    <location>
        <position position="2762"/>
    </location>
</feature>
<feature type="sequence variant" id="VAR_016147" description="In dbSNP:rs3204953." evidence="12">
    <original>V</original>
    <variation>I</variation>
    <location>
        <position position="3064"/>
    </location>
</feature>
<feature type="mutagenesis site" description="Loss of DNA polymerase catalytic activity; when associated with N-2783." evidence="8">
    <original>D</original>
    <variation>N</variation>
    <location>
        <position position="2614"/>
    </location>
</feature>
<feature type="mutagenesis site" description="Loss of DNA polymerase catalytic activity; when associated with N-2614." evidence="8">
    <original>D</original>
    <variation>N</variation>
    <location>
        <position position="2783"/>
    </location>
</feature>
<feature type="sequence conflict" description="In Ref. 4; AAC28460 and 7; AAB88486." evidence="14" ref="4 7">
    <original>E</original>
    <variation>Q</variation>
    <location>
        <position position="237"/>
    </location>
</feature>
<feature type="strand" evidence="17">
    <location>
        <begin position="1877"/>
        <end position="1882"/>
    </location>
</feature>
<feature type="helix" evidence="17">
    <location>
        <begin position="1887"/>
        <end position="1894"/>
    </location>
</feature>
<feature type="strand" evidence="18">
    <location>
        <begin position="1991"/>
        <end position="1998"/>
    </location>
</feature>
<feature type="helix" evidence="18">
    <location>
        <begin position="2003"/>
        <end position="2012"/>
    </location>
</feature>